<organism>
    <name type="scientific">Acidovorax sp. (strain JS42)</name>
    <dbReference type="NCBI Taxonomy" id="232721"/>
    <lineage>
        <taxon>Bacteria</taxon>
        <taxon>Pseudomonadati</taxon>
        <taxon>Pseudomonadota</taxon>
        <taxon>Betaproteobacteria</taxon>
        <taxon>Burkholderiales</taxon>
        <taxon>Comamonadaceae</taxon>
        <taxon>Acidovorax</taxon>
    </lineage>
</organism>
<evidence type="ECO:0000255" key="1">
    <source>
        <dbReference type="HAMAP-Rule" id="MF_00175"/>
    </source>
</evidence>
<evidence type="ECO:0000255" key="2">
    <source>
        <dbReference type="PROSITE-ProRule" id="PRU01250"/>
    </source>
</evidence>
<sequence length="421" mass="45972">MAEKKGSSSEKTLYCSFCGKSQHEVKKLIAGPSVFICDECIDLCNEIIRDELPTGDAGREGRGDLPTPAEIKTNLDHYVIGQEKAKRTLAVAVYNHYKRLRHKDKAGKDEVELSKSNILLIGPTGSGKTLLAQTLARQLDVPFVMADATTLTEAGYVGEDVENIVQKLLQSCNYDVERAQRGIVYIDEIDKISRKSDNPSITRDVSGEGVQQALLKLIEGTMASVPPQGGRKHPNQDFLQIDTTNILFICGGAFAGLEKVIENRTEASGIGFGAAVRSKKQRSLTEVFQDIEPEDLIKFGLIPELVGRMPVVTALAELSEDALVQILTEPKNALVKQYSKLLAMEGVELEIRPAALKSIARKAIARKTGARGLRSILEQALIGTMFDLPNVSNVEKVVVDEATIEENKAPLLVYREAAKTA</sequence>
<keyword id="KW-0067">ATP-binding</keyword>
<keyword id="KW-0143">Chaperone</keyword>
<keyword id="KW-0479">Metal-binding</keyword>
<keyword id="KW-0547">Nucleotide-binding</keyword>
<keyword id="KW-0862">Zinc</keyword>
<accession>A1W5B7</accession>
<reference key="1">
    <citation type="submission" date="2006-12" db="EMBL/GenBank/DDBJ databases">
        <title>Complete sequence of chromosome 1 of Acidovorax sp. JS42.</title>
        <authorList>
            <person name="Copeland A."/>
            <person name="Lucas S."/>
            <person name="Lapidus A."/>
            <person name="Barry K."/>
            <person name="Detter J.C."/>
            <person name="Glavina del Rio T."/>
            <person name="Dalin E."/>
            <person name="Tice H."/>
            <person name="Pitluck S."/>
            <person name="Chertkov O."/>
            <person name="Brettin T."/>
            <person name="Bruce D."/>
            <person name="Han C."/>
            <person name="Tapia R."/>
            <person name="Gilna P."/>
            <person name="Schmutz J."/>
            <person name="Larimer F."/>
            <person name="Land M."/>
            <person name="Hauser L."/>
            <person name="Kyrpides N."/>
            <person name="Kim E."/>
            <person name="Stahl D."/>
            <person name="Richardson P."/>
        </authorList>
    </citation>
    <scope>NUCLEOTIDE SEQUENCE [LARGE SCALE GENOMIC DNA]</scope>
    <source>
        <strain>JS42</strain>
    </source>
</reference>
<gene>
    <name evidence="1" type="primary">clpX</name>
    <name type="ordered locus">Ajs_1210</name>
</gene>
<dbReference type="EMBL" id="CP000539">
    <property type="protein sequence ID" value="ABM41442.1"/>
    <property type="molecule type" value="Genomic_DNA"/>
</dbReference>
<dbReference type="SMR" id="A1W5B7"/>
<dbReference type="STRING" id="232721.Ajs_1210"/>
<dbReference type="KEGG" id="ajs:Ajs_1210"/>
<dbReference type="eggNOG" id="COG1219">
    <property type="taxonomic scope" value="Bacteria"/>
</dbReference>
<dbReference type="HOGENOM" id="CLU_014218_8_2_4"/>
<dbReference type="Proteomes" id="UP000000645">
    <property type="component" value="Chromosome"/>
</dbReference>
<dbReference type="GO" id="GO:0009376">
    <property type="term" value="C:HslUV protease complex"/>
    <property type="evidence" value="ECO:0007669"/>
    <property type="project" value="TreeGrafter"/>
</dbReference>
<dbReference type="GO" id="GO:0005524">
    <property type="term" value="F:ATP binding"/>
    <property type="evidence" value="ECO:0007669"/>
    <property type="project" value="UniProtKB-UniRule"/>
</dbReference>
<dbReference type="GO" id="GO:0016887">
    <property type="term" value="F:ATP hydrolysis activity"/>
    <property type="evidence" value="ECO:0007669"/>
    <property type="project" value="InterPro"/>
</dbReference>
<dbReference type="GO" id="GO:0140662">
    <property type="term" value="F:ATP-dependent protein folding chaperone"/>
    <property type="evidence" value="ECO:0007669"/>
    <property type="project" value="InterPro"/>
</dbReference>
<dbReference type="GO" id="GO:0046983">
    <property type="term" value="F:protein dimerization activity"/>
    <property type="evidence" value="ECO:0007669"/>
    <property type="project" value="InterPro"/>
</dbReference>
<dbReference type="GO" id="GO:0051082">
    <property type="term" value="F:unfolded protein binding"/>
    <property type="evidence" value="ECO:0007669"/>
    <property type="project" value="UniProtKB-UniRule"/>
</dbReference>
<dbReference type="GO" id="GO:0008270">
    <property type="term" value="F:zinc ion binding"/>
    <property type="evidence" value="ECO:0007669"/>
    <property type="project" value="InterPro"/>
</dbReference>
<dbReference type="GO" id="GO:0051301">
    <property type="term" value="P:cell division"/>
    <property type="evidence" value="ECO:0007669"/>
    <property type="project" value="TreeGrafter"/>
</dbReference>
<dbReference type="GO" id="GO:0051603">
    <property type="term" value="P:proteolysis involved in protein catabolic process"/>
    <property type="evidence" value="ECO:0007669"/>
    <property type="project" value="TreeGrafter"/>
</dbReference>
<dbReference type="CDD" id="cd19497">
    <property type="entry name" value="RecA-like_ClpX"/>
    <property type="match status" value="1"/>
</dbReference>
<dbReference type="FunFam" id="1.10.8.60:FF:000002">
    <property type="entry name" value="ATP-dependent Clp protease ATP-binding subunit ClpX"/>
    <property type="match status" value="1"/>
</dbReference>
<dbReference type="FunFam" id="3.40.50.300:FF:000005">
    <property type="entry name" value="ATP-dependent Clp protease ATP-binding subunit ClpX"/>
    <property type="match status" value="1"/>
</dbReference>
<dbReference type="Gene3D" id="1.10.8.60">
    <property type="match status" value="1"/>
</dbReference>
<dbReference type="Gene3D" id="6.20.220.10">
    <property type="entry name" value="ClpX chaperone, C4-type zinc finger domain"/>
    <property type="match status" value="1"/>
</dbReference>
<dbReference type="Gene3D" id="3.40.50.300">
    <property type="entry name" value="P-loop containing nucleotide triphosphate hydrolases"/>
    <property type="match status" value="1"/>
</dbReference>
<dbReference type="HAMAP" id="MF_00175">
    <property type="entry name" value="ClpX"/>
    <property type="match status" value="1"/>
</dbReference>
<dbReference type="InterPro" id="IPR003593">
    <property type="entry name" value="AAA+_ATPase"/>
</dbReference>
<dbReference type="InterPro" id="IPR050052">
    <property type="entry name" value="ATP-dep_Clp_protease_ClpX"/>
</dbReference>
<dbReference type="InterPro" id="IPR003959">
    <property type="entry name" value="ATPase_AAA_core"/>
</dbReference>
<dbReference type="InterPro" id="IPR019489">
    <property type="entry name" value="Clp_ATPase_C"/>
</dbReference>
<dbReference type="InterPro" id="IPR004487">
    <property type="entry name" value="Clp_protease_ATP-bd_su_ClpX"/>
</dbReference>
<dbReference type="InterPro" id="IPR046425">
    <property type="entry name" value="ClpX_bact"/>
</dbReference>
<dbReference type="InterPro" id="IPR027417">
    <property type="entry name" value="P-loop_NTPase"/>
</dbReference>
<dbReference type="InterPro" id="IPR010603">
    <property type="entry name" value="Znf_CppX_C4"/>
</dbReference>
<dbReference type="InterPro" id="IPR038366">
    <property type="entry name" value="Znf_CppX_C4_sf"/>
</dbReference>
<dbReference type="NCBIfam" id="TIGR00382">
    <property type="entry name" value="clpX"/>
    <property type="match status" value="1"/>
</dbReference>
<dbReference type="NCBIfam" id="NF003745">
    <property type="entry name" value="PRK05342.1"/>
    <property type="match status" value="1"/>
</dbReference>
<dbReference type="PANTHER" id="PTHR48102:SF7">
    <property type="entry name" value="ATP-DEPENDENT CLP PROTEASE ATP-BINDING SUBUNIT CLPX-LIKE, MITOCHONDRIAL"/>
    <property type="match status" value="1"/>
</dbReference>
<dbReference type="PANTHER" id="PTHR48102">
    <property type="entry name" value="ATP-DEPENDENT CLP PROTEASE ATP-BINDING SUBUNIT CLPX-LIKE, MITOCHONDRIAL-RELATED"/>
    <property type="match status" value="1"/>
</dbReference>
<dbReference type="Pfam" id="PF07724">
    <property type="entry name" value="AAA_2"/>
    <property type="match status" value="1"/>
</dbReference>
<dbReference type="Pfam" id="PF10431">
    <property type="entry name" value="ClpB_D2-small"/>
    <property type="match status" value="1"/>
</dbReference>
<dbReference type="Pfam" id="PF06689">
    <property type="entry name" value="zf-C4_ClpX"/>
    <property type="match status" value="1"/>
</dbReference>
<dbReference type="SMART" id="SM00382">
    <property type="entry name" value="AAA"/>
    <property type="match status" value="1"/>
</dbReference>
<dbReference type="SMART" id="SM01086">
    <property type="entry name" value="ClpB_D2-small"/>
    <property type="match status" value="1"/>
</dbReference>
<dbReference type="SMART" id="SM00994">
    <property type="entry name" value="zf-C4_ClpX"/>
    <property type="match status" value="1"/>
</dbReference>
<dbReference type="SUPFAM" id="SSF57716">
    <property type="entry name" value="Glucocorticoid receptor-like (DNA-binding domain)"/>
    <property type="match status" value="1"/>
</dbReference>
<dbReference type="SUPFAM" id="SSF52540">
    <property type="entry name" value="P-loop containing nucleoside triphosphate hydrolases"/>
    <property type="match status" value="1"/>
</dbReference>
<dbReference type="PROSITE" id="PS51902">
    <property type="entry name" value="CLPX_ZB"/>
    <property type="match status" value="1"/>
</dbReference>
<protein>
    <recommendedName>
        <fullName evidence="1">ATP-dependent Clp protease ATP-binding subunit ClpX</fullName>
    </recommendedName>
</protein>
<feature type="chain" id="PRO_1000024508" description="ATP-dependent Clp protease ATP-binding subunit ClpX">
    <location>
        <begin position="1"/>
        <end position="421"/>
    </location>
</feature>
<feature type="domain" description="ClpX-type ZB" evidence="2">
    <location>
        <begin position="3"/>
        <end position="56"/>
    </location>
</feature>
<feature type="binding site" evidence="2">
    <location>
        <position position="15"/>
    </location>
    <ligand>
        <name>Zn(2+)</name>
        <dbReference type="ChEBI" id="CHEBI:29105"/>
    </ligand>
</feature>
<feature type="binding site" evidence="2">
    <location>
        <position position="18"/>
    </location>
    <ligand>
        <name>Zn(2+)</name>
        <dbReference type="ChEBI" id="CHEBI:29105"/>
    </ligand>
</feature>
<feature type="binding site" evidence="2">
    <location>
        <position position="37"/>
    </location>
    <ligand>
        <name>Zn(2+)</name>
        <dbReference type="ChEBI" id="CHEBI:29105"/>
    </ligand>
</feature>
<feature type="binding site" evidence="2">
    <location>
        <position position="40"/>
    </location>
    <ligand>
        <name>Zn(2+)</name>
        <dbReference type="ChEBI" id="CHEBI:29105"/>
    </ligand>
</feature>
<feature type="binding site" evidence="1">
    <location>
        <begin position="123"/>
        <end position="130"/>
    </location>
    <ligand>
        <name>ATP</name>
        <dbReference type="ChEBI" id="CHEBI:30616"/>
    </ligand>
</feature>
<name>CLPX_ACISJ</name>
<comment type="function">
    <text evidence="1">ATP-dependent specificity component of the Clp protease. It directs the protease to specific substrates. Can perform chaperone functions in the absence of ClpP.</text>
</comment>
<comment type="subunit">
    <text evidence="1">Component of the ClpX-ClpP complex. Forms a hexameric ring that, in the presence of ATP, binds to fourteen ClpP subunits assembled into a disk-like structure with a central cavity, resembling the structure of eukaryotic proteasomes.</text>
</comment>
<comment type="similarity">
    <text evidence="1">Belongs to the ClpX chaperone family.</text>
</comment>
<proteinExistence type="inferred from homology"/>